<sequence length="177" mass="20314">MYCLFCQHTDTRVIDSRVSEDGATIRRRRECEACGERFSTLETIELKLPVIIKKDGGREAFDGRKLRTSFDRALQKRPVAEERIEMAMRAVIHRLRMAGEREVPSIVVGECVMAELRKLDHVGYVRFASVYRSFQDVADFREEIEKLESELLVSREQLPLLEAVMESIGHPSIDQGG</sequence>
<accession>Q87AS3</accession>
<proteinExistence type="inferred from homology"/>
<feature type="chain" id="PRO_0000182384" description="Transcriptional repressor NrdR">
    <location>
        <begin position="1"/>
        <end position="177"/>
    </location>
</feature>
<feature type="domain" description="ATP-cone" evidence="1">
    <location>
        <begin position="49"/>
        <end position="139"/>
    </location>
</feature>
<feature type="zinc finger region" evidence="1">
    <location>
        <begin position="3"/>
        <end position="34"/>
    </location>
</feature>
<organism>
    <name type="scientific">Xylella fastidiosa (strain Temecula1 / ATCC 700964)</name>
    <dbReference type="NCBI Taxonomy" id="183190"/>
    <lineage>
        <taxon>Bacteria</taxon>
        <taxon>Pseudomonadati</taxon>
        <taxon>Pseudomonadota</taxon>
        <taxon>Gammaproteobacteria</taxon>
        <taxon>Lysobacterales</taxon>
        <taxon>Lysobacteraceae</taxon>
        <taxon>Xylella</taxon>
    </lineage>
</organism>
<keyword id="KW-0067">ATP-binding</keyword>
<keyword id="KW-0238">DNA-binding</keyword>
<keyword id="KW-0479">Metal-binding</keyword>
<keyword id="KW-0547">Nucleotide-binding</keyword>
<keyword id="KW-1185">Reference proteome</keyword>
<keyword id="KW-0678">Repressor</keyword>
<keyword id="KW-0804">Transcription</keyword>
<keyword id="KW-0805">Transcription regulation</keyword>
<keyword id="KW-0862">Zinc</keyword>
<keyword id="KW-0863">Zinc-finger</keyword>
<dbReference type="EMBL" id="AE009442">
    <property type="protein sequence ID" value="AAO29583.1"/>
    <property type="molecule type" value="Genomic_DNA"/>
</dbReference>
<dbReference type="RefSeq" id="WP_004089673.1">
    <property type="nucleotide sequence ID" value="NC_004556.1"/>
</dbReference>
<dbReference type="SMR" id="Q87AS3"/>
<dbReference type="GeneID" id="93905594"/>
<dbReference type="KEGG" id="xft:PD_1748"/>
<dbReference type="HOGENOM" id="CLU_108412_0_1_6"/>
<dbReference type="Proteomes" id="UP000002516">
    <property type="component" value="Chromosome"/>
</dbReference>
<dbReference type="GO" id="GO:0005524">
    <property type="term" value="F:ATP binding"/>
    <property type="evidence" value="ECO:0007669"/>
    <property type="project" value="UniProtKB-KW"/>
</dbReference>
<dbReference type="GO" id="GO:0003677">
    <property type="term" value="F:DNA binding"/>
    <property type="evidence" value="ECO:0007669"/>
    <property type="project" value="UniProtKB-KW"/>
</dbReference>
<dbReference type="GO" id="GO:0008270">
    <property type="term" value="F:zinc ion binding"/>
    <property type="evidence" value="ECO:0007669"/>
    <property type="project" value="UniProtKB-UniRule"/>
</dbReference>
<dbReference type="GO" id="GO:0045892">
    <property type="term" value="P:negative regulation of DNA-templated transcription"/>
    <property type="evidence" value="ECO:0007669"/>
    <property type="project" value="UniProtKB-UniRule"/>
</dbReference>
<dbReference type="HAMAP" id="MF_00440">
    <property type="entry name" value="NrdR"/>
    <property type="match status" value="1"/>
</dbReference>
<dbReference type="InterPro" id="IPR005144">
    <property type="entry name" value="ATP-cone_dom"/>
</dbReference>
<dbReference type="InterPro" id="IPR055173">
    <property type="entry name" value="NrdR-like_N"/>
</dbReference>
<dbReference type="InterPro" id="IPR003796">
    <property type="entry name" value="RNR_NrdR-like"/>
</dbReference>
<dbReference type="NCBIfam" id="TIGR00244">
    <property type="entry name" value="transcriptional regulator NrdR"/>
    <property type="match status" value="1"/>
</dbReference>
<dbReference type="PANTHER" id="PTHR30455">
    <property type="entry name" value="TRANSCRIPTIONAL REPRESSOR NRDR"/>
    <property type="match status" value="1"/>
</dbReference>
<dbReference type="PANTHER" id="PTHR30455:SF2">
    <property type="entry name" value="TRANSCRIPTIONAL REPRESSOR NRDR"/>
    <property type="match status" value="1"/>
</dbReference>
<dbReference type="Pfam" id="PF03477">
    <property type="entry name" value="ATP-cone"/>
    <property type="match status" value="1"/>
</dbReference>
<dbReference type="Pfam" id="PF22811">
    <property type="entry name" value="Zn_ribbon_NrdR"/>
    <property type="match status" value="1"/>
</dbReference>
<dbReference type="PROSITE" id="PS51161">
    <property type="entry name" value="ATP_CONE"/>
    <property type="match status" value="1"/>
</dbReference>
<name>NRDR_XYLFT</name>
<evidence type="ECO:0000255" key="1">
    <source>
        <dbReference type="HAMAP-Rule" id="MF_00440"/>
    </source>
</evidence>
<gene>
    <name evidence="1" type="primary">nrdR</name>
    <name type="ordered locus">PD_1748</name>
</gene>
<protein>
    <recommendedName>
        <fullName evidence="1">Transcriptional repressor NrdR</fullName>
    </recommendedName>
</protein>
<reference key="1">
    <citation type="journal article" date="2003" name="J. Bacteriol.">
        <title>Comparative analyses of the complete genome sequences of Pierce's disease and citrus variegated chlorosis strains of Xylella fastidiosa.</title>
        <authorList>
            <person name="Van Sluys M.A."/>
            <person name="de Oliveira M.C."/>
            <person name="Monteiro-Vitorello C.B."/>
            <person name="Miyaki C.Y."/>
            <person name="Furlan L.R."/>
            <person name="Camargo L.E.A."/>
            <person name="da Silva A.C.R."/>
            <person name="Moon D.H."/>
            <person name="Takita M.A."/>
            <person name="Lemos E.G.M."/>
            <person name="Machado M.A."/>
            <person name="Ferro M.I.T."/>
            <person name="da Silva F.R."/>
            <person name="Goldman M.H.S."/>
            <person name="Goldman G.H."/>
            <person name="Lemos M.V.F."/>
            <person name="El-Dorry H."/>
            <person name="Tsai S.M."/>
            <person name="Carrer H."/>
            <person name="Carraro D.M."/>
            <person name="de Oliveira R.C."/>
            <person name="Nunes L.R."/>
            <person name="Siqueira W.J."/>
            <person name="Coutinho L.L."/>
            <person name="Kimura E.T."/>
            <person name="Ferro E.S."/>
            <person name="Harakava R."/>
            <person name="Kuramae E.E."/>
            <person name="Marino C.L."/>
            <person name="Giglioti E."/>
            <person name="Abreu I.L."/>
            <person name="Alves L.M.C."/>
            <person name="do Amaral A.M."/>
            <person name="Baia G.S."/>
            <person name="Blanco S.R."/>
            <person name="Brito M.S."/>
            <person name="Cannavan F.S."/>
            <person name="Celestino A.V."/>
            <person name="da Cunha A.F."/>
            <person name="Fenille R.C."/>
            <person name="Ferro J.A."/>
            <person name="Formighieri E.F."/>
            <person name="Kishi L.T."/>
            <person name="Leoni S.G."/>
            <person name="Oliveira A.R."/>
            <person name="Rosa V.E. Jr."/>
            <person name="Sassaki F.T."/>
            <person name="Sena J.A.D."/>
            <person name="de Souza A.A."/>
            <person name="Truffi D."/>
            <person name="Tsukumo F."/>
            <person name="Yanai G.M."/>
            <person name="Zaros L.G."/>
            <person name="Civerolo E.L."/>
            <person name="Simpson A.J.G."/>
            <person name="Almeida N.F. Jr."/>
            <person name="Setubal J.C."/>
            <person name="Kitajima J.P."/>
        </authorList>
    </citation>
    <scope>NUCLEOTIDE SEQUENCE [LARGE SCALE GENOMIC DNA]</scope>
    <source>
        <strain>Temecula1 / ATCC 700964</strain>
    </source>
</reference>
<comment type="function">
    <text evidence="1">Negatively regulates transcription of bacterial ribonucleotide reductase nrd genes and operons by binding to NrdR-boxes.</text>
</comment>
<comment type="cofactor">
    <cofactor evidence="1">
        <name>Zn(2+)</name>
        <dbReference type="ChEBI" id="CHEBI:29105"/>
    </cofactor>
    <text evidence="1">Binds 1 zinc ion.</text>
</comment>
<comment type="similarity">
    <text evidence="1">Belongs to the NrdR family.</text>
</comment>